<reference key="1">
    <citation type="submission" date="2006-08" db="EMBL/GenBank/DDBJ databases">
        <title>Complete sequence of Shewanella sp. MR-4.</title>
        <authorList>
            <consortium name="US DOE Joint Genome Institute"/>
            <person name="Copeland A."/>
            <person name="Lucas S."/>
            <person name="Lapidus A."/>
            <person name="Barry K."/>
            <person name="Detter J.C."/>
            <person name="Glavina del Rio T."/>
            <person name="Hammon N."/>
            <person name="Israni S."/>
            <person name="Dalin E."/>
            <person name="Tice H."/>
            <person name="Pitluck S."/>
            <person name="Kiss H."/>
            <person name="Brettin T."/>
            <person name="Bruce D."/>
            <person name="Han C."/>
            <person name="Tapia R."/>
            <person name="Gilna P."/>
            <person name="Schmutz J."/>
            <person name="Larimer F."/>
            <person name="Land M."/>
            <person name="Hauser L."/>
            <person name="Kyrpides N."/>
            <person name="Mikhailova N."/>
            <person name="Nealson K."/>
            <person name="Konstantinidis K."/>
            <person name="Klappenbach J."/>
            <person name="Tiedje J."/>
            <person name="Richardson P."/>
        </authorList>
    </citation>
    <scope>NUCLEOTIDE SEQUENCE [LARGE SCALE GENOMIC DNA]</scope>
    <source>
        <strain>MR-4</strain>
    </source>
</reference>
<comment type="function">
    <text evidence="1">Catalyzes the decarboxylation of 3-octaprenyl-4-hydroxy benzoate to 2-octaprenylphenol, an intermediate step in ubiquinone biosynthesis.</text>
</comment>
<comment type="catalytic activity">
    <reaction evidence="1">
        <text>a 4-hydroxy-3-(all-trans-polyprenyl)benzoate + H(+) = a 2-(all-trans-polyprenyl)phenol + CO2</text>
        <dbReference type="Rhea" id="RHEA:41680"/>
        <dbReference type="Rhea" id="RHEA-COMP:9514"/>
        <dbReference type="Rhea" id="RHEA-COMP:9516"/>
        <dbReference type="ChEBI" id="CHEBI:1269"/>
        <dbReference type="ChEBI" id="CHEBI:15378"/>
        <dbReference type="ChEBI" id="CHEBI:16526"/>
        <dbReference type="ChEBI" id="CHEBI:78396"/>
        <dbReference type="EC" id="4.1.1.98"/>
    </reaction>
</comment>
<comment type="cofactor">
    <cofactor evidence="1">
        <name>prenylated FMN</name>
        <dbReference type="ChEBI" id="CHEBI:87746"/>
    </cofactor>
    <text evidence="1">Binds 1 prenylated FMN per subunit.</text>
</comment>
<comment type="cofactor">
    <cofactor evidence="1">
        <name>Mn(2+)</name>
        <dbReference type="ChEBI" id="CHEBI:29035"/>
    </cofactor>
</comment>
<comment type="pathway">
    <text evidence="1">Cofactor biosynthesis; ubiquinone biosynthesis.</text>
</comment>
<comment type="subunit">
    <text evidence="1">Homohexamer.</text>
</comment>
<comment type="subcellular location">
    <subcellularLocation>
        <location evidence="1">Cell membrane</location>
        <topology evidence="1">Peripheral membrane protein</topology>
    </subcellularLocation>
</comment>
<comment type="similarity">
    <text evidence="1">Belongs to the UbiD family.</text>
</comment>
<dbReference type="EC" id="4.1.1.98" evidence="1"/>
<dbReference type="EMBL" id="CP000446">
    <property type="protein sequence ID" value="ABI37586.1"/>
    <property type="molecule type" value="Genomic_DNA"/>
</dbReference>
<dbReference type="RefSeq" id="WP_011621308.1">
    <property type="nucleotide sequence ID" value="NC_008321.1"/>
</dbReference>
<dbReference type="SMR" id="Q0HMY1"/>
<dbReference type="KEGG" id="she:Shewmr4_0506"/>
<dbReference type="HOGENOM" id="CLU_023348_4_1_6"/>
<dbReference type="UniPathway" id="UPA00232"/>
<dbReference type="GO" id="GO:0005829">
    <property type="term" value="C:cytosol"/>
    <property type="evidence" value="ECO:0007669"/>
    <property type="project" value="TreeGrafter"/>
</dbReference>
<dbReference type="GO" id="GO:0005886">
    <property type="term" value="C:plasma membrane"/>
    <property type="evidence" value="ECO:0007669"/>
    <property type="project" value="UniProtKB-SubCell"/>
</dbReference>
<dbReference type="GO" id="GO:0008694">
    <property type="term" value="F:3-octaprenyl-4-hydroxybenzoate carboxy-lyase activity"/>
    <property type="evidence" value="ECO:0007669"/>
    <property type="project" value="UniProtKB-UniRule"/>
</dbReference>
<dbReference type="GO" id="GO:0046872">
    <property type="term" value="F:metal ion binding"/>
    <property type="evidence" value="ECO:0007669"/>
    <property type="project" value="UniProtKB-KW"/>
</dbReference>
<dbReference type="GO" id="GO:0006744">
    <property type="term" value="P:ubiquinone biosynthetic process"/>
    <property type="evidence" value="ECO:0007669"/>
    <property type="project" value="UniProtKB-UniRule"/>
</dbReference>
<dbReference type="FunFam" id="1.20.5.570:FF:000001">
    <property type="entry name" value="3-octaprenyl-4-hydroxybenzoate carboxy-lyase"/>
    <property type="match status" value="1"/>
</dbReference>
<dbReference type="FunFam" id="3.40.1670.10:FF:000001">
    <property type="entry name" value="3-octaprenyl-4-hydroxybenzoate carboxy-lyase"/>
    <property type="match status" value="1"/>
</dbReference>
<dbReference type="Gene3D" id="1.20.5.570">
    <property type="entry name" value="Single helix bin"/>
    <property type="match status" value="1"/>
</dbReference>
<dbReference type="Gene3D" id="3.40.1670.10">
    <property type="entry name" value="UbiD C-terminal domain-like"/>
    <property type="match status" value="1"/>
</dbReference>
<dbReference type="HAMAP" id="MF_01636">
    <property type="entry name" value="UbiD"/>
    <property type="match status" value="1"/>
</dbReference>
<dbReference type="InterPro" id="IPR002830">
    <property type="entry name" value="UbiD"/>
</dbReference>
<dbReference type="InterPro" id="IPR049381">
    <property type="entry name" value="UbiD-like_C"/>
</dbReference>
<dbReference type="InterPro" id="IPR049383">
    <property type="entry name" value="UbiD-like_N"/>
</dbReference>
<dbReference type="InterPro" id="IPR023677">
    <property type="entry name" value="UbiD_bacteria"/>
</dbReference>
<dbReference type="InterPro" id="IPR048304">
    <property type="entry name" value="UbiD_Rift_dom"/>
</dbReference>
<dbReference type="NCBIfam" id="NF008175">
    <property type="entry name" value="PRK10922.1"/>
    <property type="match status" value="1"/>
</dbReference>
<dbReference type="NCBIfam" id="TIGR00148">
    <property type="entry name" value="UbiD family decarboxylase"/>
    <property type="match status" value="1"/>
</dbReference>
<dbReference type="PANTHER" id="PTHR30108">
    <property type="entry name" value="3-OCTAPRENYL-4-HYDROXYBENZOATE CARBOXY-LYASE-RELATED"/>
    <property type="match status" value="1"/>
</dbReference>
<dbReference type="PANTHER" id="PTHR30108:SF17">
    <property type="entry name" value="FERULIC ACID DECARBOXYLASE 1"/>
    <property type="match status" value="1"/>
</dbReference>
<dbReference type="Pfam" id="PF01977">
    <property type="entry name" value="UbiD"/>
    <property type="match status" value="1"/>
</dbReference>
<dbReference type="Pfam" id="PF20696">
    <property type="entry name" value="UbiD_C"/>
    <property type="match status" value="1"/>
</dbReference>
<dbReference type="Pfam" id="PF20695">
    <property type="entry name" value="UbiD_N"/>
    <property type="match status" value="1"/>
</dbReference>
<dbReference type="SUPFAM" id="SSF50475">
    <property type="entry name" value="FMN-binding split barrel"/>
    <property type="match status" value="1"/>
</dbReference>
<dbReference type="SUPFAM" id="SSF143968">
    <property type="entry name" value="UbiD C-terminal domain-like"/>
    <property type="match status" value="1"/>
</dbReference>
<sequence length="493" mass="55464">MSFKDLRSFIDHLEANGELKRISYPVDPHLEMTEIADRVLRAKGPALLFENPTNHSMPVLANLFGTPKRVAMALGKEDPLALRDVGELLAFLKEPEPPRGFKDAISKIPMFKQALNMPPKTVRNPACQQVVKTGDEVDLTQLPIQHCWPGDVAPLVTWGLTITKGPRKSRQNLGIYRQQLLGKNKLIMRWLSHRGGALDFADFKEQFPGERYPVVVALGSDPVTILGAVTPVPDAMSEYAFAGLLRGERTEVCKALSCDLEVPASSEIILEGYIDPDEMAEEGPYGDHTGYYNETDKFPVFTVTHITHRKDPIYHSTYTGRPPDEPAMLGVALNEVFVPILRKQYPEIIDFYLPPEGCSYRMAVISIRKQYPGHAKRVMMGAWSFLRQFMYTKFIVVVDDDVNCRDWNDVIWAITTRMDPKRDTVMIDNTPIDYLDFASPVAGLGSKMGLDATNKREGETNREWGTPIVMDPKVKQKIDSIWDELGIDDSPTL</sequence>
<keyword id="KW-1003">Cell membrane</keyword>
<keyword id="KW-0210">Decarboxylase</keyword>
<keyword id="KW-0285">Flavoprotein</keyword>
<keyword id="KW-0288">FMN</keyword>
<keyword id="KW-0456">Lyase</keyword>
<keyword id="KW-0464">Manganese</keyword>
<keyword id="KW-0472">Membrane</keyword>
<keyword id="KW-0479">Metal-binding</keyword>
<keyword id="KW-0831">Ubiquinone biosynthesis</keyword>
<protein>
    <recommendedName>
        <fullName evidence="1">3-octaprenyl-4-hydroxybenzoate carboxy-lyase</fullName>
        <ecNumber evidence="1">4.1.1.98</ecNumber>
    </recommendedName>
    <alternativeName>
        <fullName evidence="1">Polyprenyl p-hydroxybenzoate decarboxylase</fullName>
    </alternativeName>
</protein>
<gene>
    <name evidence="1" type="primary">ubiD</name>
    <name type="ordered locus">Shewmr4_0506</name>
</gene>
<accession>Q0HMY1</accession>
<proteinExistence type="inferred from homology"/>
<evidence type="ECO:0000255" key="1">
    <source>
        <dbReference type="HAMAP-Rule" id="MF_01636"/>
    </source>
</evidence>
<organism>
    <name type="scientific">Shewanella sp. (strain MR-4)</name>
    <dbReference type="NCBI Taxonomy" id="60480"/>
    <lineage>
        <taxon>Bacteria</taxon>
        <taxon>Pseudomonadati</taxon>
        <taxon>Pseudomonadota</taxon>
        <taxon>Gammaproteobacteria</taxon>
        <taxon>Alteromonadales</taxon>
        <taxon>Shewanellaceae</taxon>
        <taxon>Shewanella</taxon>
    </lineage>
</organism>
<feature type="chain" id="PRO_0000267697" description="3-octaprenyl-4-hydroxybenzoate carboxy-lyase">
    <location>
        <begin position="1"/>
        <end position="493"/>
    </location>
</feature>
<feature type="active site" description="Proton donor" evidence="1">
    <location>
        <position position="287"/>
    </location>
</feature>
<feature type="binding site" evidence="1">
    <location>
        <position position="172"/>
    </location>
    <ligand>
        <name>Mn(2+)</name>
        <dbReference type="ChEBI" id="CHEBI:29035"/>
    </ligand>
</feature>
<feature type="binding site" evidence="1">
    <location>
        <begin position="175"/>
        <end position="177"/>
    </location>
    <ligand>
        <name>prenylated FMN</name>
        <dbReference type="ChEBI" id="CHEBI:87746"/>
    </ligand>
</feature>
<feature type="binding site" evidence="1">
    <location>
        <begin position="189"/>
        <end position="191"/>
    </location>
    <ligand>
        <name>prenylated FMN</name>
        <dbReference type="ChEBI" id="CHEBI:87746"/>
    </ligand>
</feature>
<feature type="binding site" evidence="1">
    <location>
        <begin position="194"/>
        <end position="195"/>
    </location>
    <ligand>
        <name>prenylated FMN</name>
        <dbReference type="ChEBI" id="CHEBI:87746"/>
    </ligand>
</feature>
<feature type="binding site" evidence="1">
    <location>
        <position position="238"/>
    </location>
    <ligand>
        <name>Mn(2+)</name>
        <dbReference type="ChEBI" id="CHEBI:29035"/>
    </ligand>
</feature>
<name>UBID_SHESM</name>